<accession>Q6B0Y8</accession>
<gene>
    <name type="ordered locus">YML012C-A</name>
    <name type="ORF">YML013C-A</name>
</gene>
<name>YM012_YEAST</name>
<reference key="1">
    <citation type="journal article" date="1997" name="Nature">
        <title>The nucleotide sequence of Saccharomyces cerevisiae chromosome XIII.</title>
        <authorList>
            <person name="Bowman S."/>
            <person name="Churcher C.M."/>
            <person name="Badcock K."/>
            <person name="Brown D."/>
            <person name="Chillingworth T."/>
            <person name="Connor R."/>
            <person name="Dedman K."/>
            <person name="Devlin K."/>
            <person name="Gentles S."/>
            <person name="Hamlin N."/>
            <person name="Hunt S."/>
            <person name="Jagels K."/>
            <person name="Lye G."/>
            <person name="Moule S."/>
            <person name="Odell C."/>
            <person name="Pearson D."/>
            <person name="Rajandream M.A."/>
            <person name="Rice P."/>
            <person name="Skelton J."/>
            <person name="Walsh S.V."/>
            <person name="Whitehead S."/>
            <person name="Barrell B.G."/>
        </authorList>
    </citation>
    <scope>NUCLEOTIDE SEQUENCE [LARGE SCALE GENOMIC DNA]</scope>
    <source>
        <strain>ATCC 204508 / S288c</strain>
    </source>
</reference>
<reference key="2">
    <citation type="journal article" date="2014" name="G3 (Bethesda)">
        <title>The reference genome sequence of Saccharomyces cerevisiae: Then and now.</title>
        <authorList>
            <person name="Engel S.R."/>
            <person name="Dietrich F.S."/>
            <person name="Fisk D.G."/>
            <person name="Binkley G."/>
            <person name="Balakrishnan R."/>
            <person name="Costanzo M.C."/>
            <person name="Dwight S.S."/>
            <person name="Hitz B.C."/>
            <person name="Karra K."/>
            <person name="Nash R.S."/>
            <person name="Weng S."/>
            <person name="Wong E.D."/>
            <person name="Lloyd P."/>
            <person name="Skrzypek M.S."/>
            <person name="Miyasato S.R."/>
            <person name="Simison M."/>
            <person name="Cherry J.M."/>
        </authorList>
    </citation>
    <scope>GENOME REANNOTATION</scope>
    <source>
        <strain>ATCC 204508 / S288c</strain>
    </source>
</reference>
<reference key="3">
    <citation type="journal article" date="2007" name="Genome Res.">
        <title>Approaching a complete repository of sequence-verified protein-encoding clones for Saccharomyces cerevisiae.</title>
        <authorList>
            <person name="Hu Y."/>
            <person name="Rolfs A."/>
            <person name="Bhullar B."/>
            <person name="Murthy T.V.S."/>
            <person name="Zhu C."/>
            <person name="Berger M.F."/>
            <person name="Camargo A.A."/>
            <person name="Kelley F."/>
            <person name="McCarron S."/>
            <person name="Jepson D."/>
            <person name="Richardson A."/>
            <person name="Raphael J."/>
            <person name="Moreira D."/>
            <person name="Taycher E."/>
            <person name="Zuo D."/>
            <person name="Mohr S."/>
            <person name="Kane M.F."/>
            <person name="Williamson J."/>
            <person name="Simpson A.J.G."/>
            <person name="Bulyk M.L."/>
            <person name="Harlow E."/>
            <person name="Marsischky G."/>
            <person name="Kolodner R.D."/>
            <person name="LaBaer J."/>
        </authorList>
    </citation>
    <scope>NUCLEOTIDE SEQUENCE [GENOMIC DNA]</scope>
    <source>
        <strain>ATCC 204508 / S288c</strain>
    </source>
</reference>
<comment type="miscellaneous">
    <text evidence="2">Almost completely overlaps SEL1.</text>
</comment>
<comment type="caution">
    <text evidence="3">Product of a dubious gene prediction unlikely to encode a functional protein. Because of that it is not part of the S.cerevisiae S288c complete/reference proteome set.</text>
</comment>
<evidence type="ECO:0000256" key="1">
    <source>
        <dbReference type="SAM" id="MobiDB-lite"/>
    </source>
</evidence>
<evidence type="ECO:0000305" key="2"/>
<evidence type="ECO:0000305" key="3">
    <source>
    </source>
</evidence>
<organism>
    <name type="scientific">Saccharomyces cerevisiae (strain ATCC 204508 / S288c)</name>
    <name type="common">Baker's yeast</name>
    <dbReference type="NCBI Taxonomy" id="559292"/>
    <lineage>
        <taxon>Eukaryota</taxon>
        <taxon>Fungi</taxon>
        <taxon>Dikarya</taxon>
        <taxon>Ascomycota</taxon>
        <taxon>Saccharomycotina</taxon>
        <taxon>Saccharomycetes</taxon>
        <taxon>Saccharomycetales</taxon>
        <taxon>Saccharomycetaceae</taxon>
        <taxon>Saccharomyces</taxon>
    </lineage>
</organism>
<sequence length="125" mass="13414">MLFYHCSSFSSSSSSSSSSASTRRLPFGHSWGTWSTDMCSLGCTVYLGKGDTNSKSNSSLPRSRSNEVSSLLMMWPSSSIVVAVAVSSCPSLKQSISSSADNCLILSWRALDHSAGSLEYTARYM</sequence>
<proteinExistence type="uncertain"/>
<dbReference type="EMBL" id="Z49810">
    <property type="status" value="NOT_ANNOTATED_CDS"/>
    <property type="molecule type" value="Genomic_DNA"/>
</dbReference>
<dbReference type="EMBL" id="AY693292">
    <property type="protein sequence ID" value="AAT93311.1"/>
    <property type="molecule type" value="Genomic_DNA"/>
</dbReference>
<dbReference type="STRING" id="4932.YML012C-A"/>
<dbReference type="iPTMnet" id="Q6B0Y8"/>
<dbReference type="PaxDb" id="4932-YML012C-A"/>
<dbReference type="EnsemblFungi" id="YML012C-A_mRNA">
    <property type="protein sequence ID" value="YML012C-A"/>
    <property type="gene ID" value="YML012C-A"/>
</dbReference>
<dbReference type="AGR" id="SGD:S000004474"/>
<dbReference type="SGD" id="S000004474">
    <property type="gene designation" value="YML012C-A"/>
</dbReference>
<dbReference type="HOGENOM" id="CLU_1994404_0_0_1"/>
<feature type="chain" id="PRO_0000299664" description="Putative uncharacterized protein YML012C-A">
    <location>
        <begin position="1"/>
        <end position="125"/>
    </location>
</feature>
<feature type="region of interest" description="Disordered" evidence="1">
    <location>
        <begin position="1"/>
        <end position="21"/>
    </location>
</feature>
<feature type="compositionally biased region" description="Low complexity" evidence="1">
    <location>
        <begin position="7"/>
        <end position="21"/>
    </location>
</feature>
<protein>
    <recommendedName>
        <fullName>Putative uncharacterized protein YML012C-A</fullName>
    </recommendedName>
</protein>